<sequence>MSPAQQLTLPAVIVVASVMLLGCEGPPPGTEQIGYRGVGMENYYNKRQRALSIQANQPVESLPAADSTGPKASEVYQNVQVLKDLSVGEFTRTMVAVTTWVSPKEGCNYCHVPGNWASDDIYTKVVSRRMFELVRAANSDWKAHVAETGVTCYTCHRGNPVPKYAWVTDPGPKYPSGLKPTGQNYGSKTVAYASLPFDPLTPFLDQANEIRITGNAALAGSNPASLKQAEWTFGLMMNISDSLGVGCTFCHNTRAFNDWTQSTPKRTTAWYAIRHVRDINQNYIWPLNDVLPASRKGPYGDPLRVSCMTCHQAVNKPLYGAQMAKDYPGLYKTAVTQEALAGSAPASEAAPAAATEAAPEAPAQEVPAAEAVPAAAEPGAAEAAGSVEPAPVEEVAPAPAAQRL</sequence>
<keyword id="KW-0002">3D-structure</keyword>
<keyword id="KW-0249">Electron transport</keyword>
<keyword id="KW-0349">Heme</keyword>
<keyword id="KW-0408">Iron</keyword>
<keyword id="KW-0449">Lipoprotein</keyword>
<keyword id="KW-0472">Membrane</keyword>
<keyword id="KW-0479">Metal-binding</keyword>
<keyword id="KW-0564">Palmitate</keyword>
<keyword id="KW-0602">Photosynthesis</keyword>
<keyword id="KW-0674">Reaction center</keyword>
<keyword id="KW-0732">Signal</keyword>
<keyword id="KW-0813">Transport</keyword>
<name>CYCR_THETI</name>
<protein>
    <recommendedName>
        <fullName evidence="2 8 11">Photosynthetic reaction center cytochrome c subunit</fullName>
    </recommendedName>
</protein>
<feature type="signal peptide" evidence="1">
    <location>
        <begin position="1"/>
        <end position="22"/>
    </location>
</feature>
<feature type="chain" id="PRO_0000437124" description="Photosynthetic reaction center cytochrome c subunit">
    <location>
        <begin position="23"/>
        <end position="404"/>
    </location>
</feature>
<feature type="region of interest" description="Disordered" evidence="6">
    <location>
        <begin position="346"/>
        <end position="404"/>
    </location>
</feature>
<feature type="binding site" description="axial binding residue" evidence="4 7 13">
    <location>
        <position position="94"/>
    </location>
    <ligand>
        <name>heme</name>
        <dbReference type="ChEBI" id="CHEBI:30413"/>
        <label>1</label>
    </ligand>
    <ligandPart>
        <name>Fe</name>
        <dbReference type="ChEBI" id="CHEBI:18248"/>
    </ligandPart>
</feature>
<feature type="binding site" description="covalent" evidence="3 7 13">
    <location>
        <position position="107"/>
    </location>
    <ligand>
        <name>heme</name>
        <dbReference type="ChEBI" id="CHEBI:30413"/>
        <label>1</label>
    </ligand>
</feature>
<feature type="binding site" description="covalent" evidence="3 7 13">
    <location>
        <position position="110"/>
    </location>
    <ligand>
        <name>heme</name>
        <dbReference type="ChEBI" id="CHEBI:30413"/>
        <label>1</label>
    </ligand>
</feature>
<feature type="binding site" description="axial binding residue" evidence="4 7 13">
    <location>
        <position position="111"/>
    </location>
    <ligand>
        <name>heme</name>
        <dbReference type="ChEBI" id="CHEBI:30413"/>
        <label>1</label>
    </ligand>
    <ligandPart>
        <name>Fe</name>
        <dbReference type="ChEBI" id="CHEBI:18248"/>
    </ligandPart>
</feature>
<feature type="binding site" description="axial binding residue" evidence="4 7 13">
    <location>
        <position position="130"/>
    </location>
    <ligand>
        <name>heme</name>
        <dbReference type="ChEBI" id="CHEBI:30413"/>
        <label>2</label>
    </ligand>
    <ligandPart>
        <name>Fe</name>
        <dbReference type="ChEBI" id="CHEBI:18248"/>
    </ligandPart>
</feature>
<feature type="binding site" description="axial binding residue" evidence="4 7 13">
    <location>
        <position position="144"/>
    </location>
    <ligand>
        <name>heme</name>
        <dbReference type="ChEBI" id="CHEBI:30413"/>
        <label>4</label>
    </ligand>
    <ligandPart>
        <name>Fe</name>
        <dbReference type="ChEBI" id="CHEBI:18248"/>
    </ligandPart>
</feature>
<feature type="binding site" description="covalent" evidence="3 7 13">
    <location>
        <position position="152"/>
    </location>
    <ligand>
        <name>heme</name>
        <dbReference type="ChEBI" id="CHEBI:30413"/>
        <label>2</label>
    </ligand>
</feature>
<feature type="binding site" description="covalent" evidence="3 7 13">
    <location>
        <position position="155"/>
    </location>
    <ligand>
        <name>heme</name>
        <dbReference type="ChEBI" id="CHEBI:30413"/>
        <label>2</label>
    </ligand>
</feature>
<feature type="binding site" description="axial binding residue" evidence="4 7 13">
    <location>
        <position position="156"/>
    </location>
    <ligand>
        <name>heme</name>
        <dbReference type="ChEBI" id="CHEBI:30413"/>
        <label>2</label>
    </ligand>
    <ligandPart>
        <name>Fe</name>
        <dbReference type="ChEBI" id="CHEBI:18248"/>
    </ligandPart>
</feature>
<feature type="binding site" description="axial binding residue" evidence="4 7 13">
    <location>
        <position position="236"/>
    </location>
    <ligand>
        <name>heme</name>
        <dbReference type="ChEBI" id="CHEBI:30413"/>
        <label>3</label>
    </ligand>
    <ligandPart>
        <name>Fe</name>
        <dbReference type="ChEBI" id="CHEBI:18248"/>
    </ligandPart>
</feature>
<feature type="binding site" description="covalent" evidence="3 7 13">
    <location>
        <position position="247"/>
    </location>
    <ligand>
        <name>heme</name>
        <dbReference type="ChEBI" id="CHEBI:30413"/>
        <label>3</label>
    </ligand>
</feature>
<feature type="binding site" description="covalent" evidence="3 7 13">
    <location>
        <position position="250"/>
    </location>
    <ligand>
        <name>heme</name>
        <dbReference type="ChEBI" id="CHEBI:30413"/>
        <label>3</label>
    </ligand>
</feature>
<feature type="binding site" description="axial binding residue" evidence="4 7 13">
    <location>
        <position position="251"/>
    </location>
    <ligand>
        <name>heme</name>
        <dbReference type="ChEBI" id="CHEBI:30413"/>
        <label>3</label>
    </ligand>
    <ligandPart>
        <name>Fe</name>
        <dbReference type="ChEBI" id="CHEBI:18248"/>
    </ligandPart>
</feature>
<feature type="binding site" description="covalent" evidence="3 7 13">
    <location>
        <position position="307"/>
    </location>
    <ligand>
        <name>heme</name>
        <dbReference type="ChEBI" id="CHEBI:30413"/>
        <label>4</label>
    </ligand>
</feature>
<feature type="binding site" description="covalent" evidence="3 7 13">
    <location>
        <position position="310"/>
    </location>
    <ligand>
        <name>heme</name>
        <dbReference type="ChEBI" id="CHEBI:30413"/>
        <label>4</label>
    </ligand>
</feature>
<feature type="binding site" description="axial binding residue" evidence="4 7 13">
    <location>
        <position position="311"/>
    </location>
    <ligand>
        <name>heme</name>
        <dbReference type="ChEBI" id="CHEBI:30413"/>
        <label>4</label>
    </ligand>
    <ligandPart>
        <name>Fe</name>
        <dbReference type="ChEBI" id="CHEBI:18248"/>
    </ligandPart>
</feature>
<feature type="lipid moiety-binding region" description="N-palmitoyl cysteine" evidence="5">
    <location>
        <position position="23"/>
    </location>
</feature>
<feature type="lipid moiety-binding region" description="S-diacylglycerol cysteine" evidence="5">
    <location>
        <position position="23"/>
    </location>
</feature>
<feature type="sequence conflict" description="In Ref. 2; BAF80147." evidence="9" ref="2">
    <original>M</original>
    <variation>S</variation>
    <location>
        <position position="308"/>
    </location>
</feature>
<feature type="strand" evidence="16">
    <location>
        <begin position="29"/>
        <end position="32"/>
    </location>
</feature>
<feature type="strand" evidence="16">
    <location>
        <begin position="41"/>
        <end position="44"/>
    </location>
</feature>
<feature type="helix" evidence="16">
    <location>
        <begin position="46"/>
        <end position="55"/>
    </location>
</feature>
<feature type="strand" evidence="16">
    <location>
        <begin position="69"/>
        <end position="71"/>
    </location>
</feature>
<feature type="helix" evidence="16">
    <location>
        <begin position="72"/>
        <end position="75"/>
    </location>
</feature>
<feature type="strand" evidence="16">
    <location>
        <begin position="76"/>
        <end position="78"/>
    </location>
</feature>
<feature type="strand" evidence="16">
    <location>
        <begin position="80"/>
        <end position="82"/>
    </location>
</feature>
<feature type="strand" evidence="15">
    <location>
        <begin position="84"/>
        <end position="86"/>
    </location>
</feature>
<feature type="helix" evidence="16">
    <location>
        <begin position="87"/>
        <end position="101"/>
    </location>
</feature>
<feature type="turn" evidence="16">
    <location>
        <begin position="103"/>
        <end position="105"/>
    </location>
</feature>
<feature type="helix" evidence="16">
    <location>
        <begin position="107"/>
        <end position="109"/>
    </location>
</feature>
<feature type="strand" evidence="16">
    <location>
        <begin position="110"/>
        <end position="112"/>
    </location>
</feature>
<feature type="strand" evidence="16">
    <location>
        <begin position="115"/>
        <end position="117"/>
    </location>
</feature>
<feature type="helix" evidence="16">
    <location>
        <begin position="122"/>
        <end position="140"/>
    </location>
</feature>
<feature type="helix" evidence="16">
    <location>
        <begin position="142"/>
        <end position="145"/>
    </location>
</feature>
<feature type="turn" evidence="16">
    <location>
        <begin position="146"/>
        <end position="148"/>
    </location>
</feature>
<feature type="helix" evidence="16">
    <location>
        <begin position="152"/>
        <end position="156"/>
    </location>
</feature>
<feature type="helix" evidence="16">
    <location>
        <begin position="188"/>
        <end position="190"/>
    </location>
</feature>
<feature type="helix" evidence="16">
    <location>
        <begin position="200"/>
        <end position="203"/>
    </location>
</feature>
<feature type="strand" evidence="16">
    <location>
        <begin position="215"/>
        <end position="221"/>
    </location>
</feature>
<feature type="helix" evidence="16">
    <location>
        <begin position="226"/>
        <end position="243"/>
    </location>
</feature>
<feature type="helix" evidence="16">
    <location>
        <begin position="247"/>
        <end position="249"/>
    </location>
</feature>
<feature type="helix" evidence="15">
    <location>
        <begin position="253"/>
        <end position="255"/>
    </location>
</feature>
<feature type="helix" evidence="16">
    <location>
        <begin position="259"/>
        <end position="261"/>
    </location>
</feature>
<feature type="helix" evidence="16">
    <location>
        <begin position="264"/>
        <end position="282"/>
    </location>
</feature>
<feature type="helix" evidence="16">
    <location>
        <begin position="285"/>
        <end position="287"/>
    </location>
</feature>
<feature type="turn" evidence="16">
    <location>
        <begin position="288"/>
        <end position="290"/>
    </location>
</feature>
<feature type="helix" evidence="16">
    <location>
        <begin position="293"/>
        <end position="295"/>
    </location>
</feature>
<feature type="helix" evidence="16">
    <location>
        <begin position="307"/>
        <end position="311"/>
    </location>
</feature>
<feature type="strand" evidence="16">
    <location>
        <begin position="314"/>
        <end position="316"/>
    </location>
</feature>
<feature type="helix" evidence="16">
    <location>
        <begin position="317"/>
        <end position="320"/>
    </location>
</feature>
<feature type="helix" evidence="16">
    <location>
        <begin position="324"/>
        <end position="326"/>
    </location>
</feature>
<feature type="helix" evidence="16">
    <location>
        <begin position="328"/>
        <end position="330"/>
    </location>
</feature>
<organism evidence="12">
    <name type="scientific">Thermochromatium tepidum</name>
    <name type="common">Chromatium tepidum</name>
    <dbReference type="NCBI Taxonomy" id="1050"/>
    <lineage>
        <taxon>Bacteria</taxon>
        <taxon>Pseudomonadati</taxon>
        <taxon>Pseudomonadota</taxon>
        <taxon>Gammaproteobacteria</taxon>
        <taxon>Chromatiales</taxon>
        <taxon>Chromatiaceae</taxon>
        <taxon>Thermochromatium</taxon>
    </lineage>
</organism>
<proteinExistence type="evidence at protein level"/>
<comment type="function">
    <text evidence="2">The reaction center of purple bacteria contains a tightly bound cytochrome molecule which re-reduces the photo oxidized primary electron donor.</text>
</comment>
<comment type="subunit">
    <text evidence="7">Component of the photosynthetic reaction center composed of protein subunits L (PufL), M (PufM), H (PuhA) and cytochrome C (PufC). The reaction center interacts with light-harvesting antenna complex LH1.</text>
</comment>
<comment type="subcellular location">
    <subcellularLocation>
        <location evidence="7">Cellular chromatophore membrane</location>
        <topology evidence="10">Lipid-anchor</topology>
    </subcellularLocation>
</comment>
<comment type="PTM">
    <text evidence="2 4 7">Binds 4 heme groups per subunit.</text>
</comment>
<accession>D2Z0P5</accession>
<accession>A8ASG7</accession>
<evidence type="ECO:0000255" key="1"/>
<evidence type="ECO:0000255" key="2">
    <source>
        <dbReference type="PIRNR" id="PIRNR000017"/>
    </source>
</evidence>
<evidence type="ECO:0000255" key="3">
    <source>
        <dbReference type="PIRSR" id="PIRSR000017-1"/>
    </source>
</evidence>
<evidence type="ECO:0000255" key="4">
    <source>
        <dbReference type="PIRSR" id="PIRSR000017-2"/>
    </source>
</evidence>
<evidence type="ECO:0000255" key="5">
    <source>
        <dbReference type="PROSITE-ProRule" id="PRU00303"/>
    </source>
</evidence>
<evidence type="ECO:0000256" key="6">
    <source>
        <dbReference type="SAM" id="MobiDB-lite"/>
    </source>
</evidence>
<evidence type="ECO:0000269" key="7">
    <source>
    </source>
</evidence>
<evidence type="ECO:0000303" key="8">
    <source>
    </source>
</evidence>
<evidence type="ECO:0000305" key="9"/>
<evidence type="ECO:0000305" key="10">
    <source>
    </source>
</evidence>
<evidence type="ECO:0000312" key="11">
    <source>
        <dbReference type="EMBL" id="BAF80147.2"/>
    </source>
</evidence>
<evidence type="ECO:0000312" key="12">
    <source>
        <dbReference type="EMBL" id="BAI67784.1"/>
    </source>
</evidence>
<evidence type="ECO:0007744" key="13">
    <source>
        <dbReference type="PDB" id="3WMM"/>
    </source>
</evidence>
<evidence type="ECO:0007744" key="14">
    <source>
        <dbReference type="PDB" id="4V8K"/>
    </source>
</evidence>
<evidence type="ECO:0007829" key="15">
    <source>
        <dbReference type="PDB" id="3WMM"/>
    </source>
</evidence>
<evidence type="ECO:0007829" key="16">
    <source>
        <dbReference type="PDB" id="5Y5S"/>
    </source>
</evidence>
<dbReference type="EMBL" id="AB543090">
    <property type="protein sequence ID" value="BAI67784.1"/>
    <property type="molecule type" value="Genomic_DNA"/>
</dbReference>
<dbReference type="EMBL" id="D85518">
    <property type="protein sequence ID" value="BAF80147.2"/>
    <property type="molecule type" value="Genomic_DNA"/>
</dbReference>
<dbReference type="PDB" id="3WMM">
    <property type="method" value="X-ray"/>
    <property type="resolution" value="3.01 A"/>
    <property type="chains" value="C=1-404"/>
</dbReference>
<dbReference type="PDB" id="4V8K">
    <property type="method" value="X-ray"/>
    <property type="resolution" value="3.01 A"/>
    <property type="chains" value="AC/BC=1-404"/>
</dbReference>
<dbReference type="PDB" id="5B5M">
    <property type="method" value="X-ray"/>
    <property type="resolution" value="3.30 A"/>
    <property type="chains" value="C/o=1-333"/>
</dbReference>
<dbReference type="PDB" id="5B5N">
    <property type="method" value="X-ray"/>
    <property type="resolution" value="3.30 A"/>
    <property type="chains" value="C/o=1-333"/>
</dbReference>
<dbReference type="PDB" id="5Y5S">
    <property type="method" value="X-ray"/>
    <property type="resolution" value="1.90 A"/>
    <property type="chains" value="C=1-404"/>
</dbReference>
<dbReference type="PDB" id="7C52">
    <property type="method" value="X-ray"/>
    <property type="resolution" value="2.89 A"/>
    <property type="chains" value="C=23-333"/>
</dbReference>
<dbReference type="PDBsum" id="3WMM"/>
<dbReference type="PDBsum" id="4V8K"/>
<dbReference type="PDBsum" id="5B5M"/>
<dbReference type="PDBsum" id="5B5N"/>
<dbReference type="PDBsum" id="5Y5S"/>
<dbReference type="PDBsum" id="7C52"/>
<dbReference type="SMR" id="D2Z0P5"/>
<dbReference type="DIP" id="DIP-60696N"/>
<dbReference type="IntAct" id="D2Z0P5">
    <property type="interactions" value="1"/>
</dbReference>
<dbReference type="TCDB" id="3.E.2.1.2">
    <property type="family name" value="the photosynthetic reaction center (prc) family"/>
</dbReference>
<dbReference type="EvolutionaryTrace" id="D2Z0P5"/>
<dbReference type="GO" id="GO:0030077">
    <property type="term" value="C:plasma membrane light-harvesting complex"/>
    <property type="evidence" value="ECO:0007669"/>
    <property type="project" value="InterPro"/>
</dbReference>
<dbReference type="GO" id="GO:0042717">
    <property type="term" value="C:plasma membrane-derived chromatophore membrane"/>
    <property type="evidence" value="ECO:0000314"/>
    <property type="project" value="UniProtKB"/>
</dbReference>
<dbReference type="GO" id="GO:0009055">
    <property type="term" value="F:electron transfer activity"/>
    <property type="evidence" value="ECO:0007669"/>
    <property type="project" value="InterPro"/>
</dbReference>
<dbReference type="GO" id="GO:0020037">
    <property type="term" value="F:heme binding"/>
    <property type="evidence" value="ECO:0000314"/>
    <property type="project" value="UniProtKB"/>
</dbReference>
<dbReference type="GO" id="GO:0005506">
    <property type="term" value="F:iron ion binding"/>
    <property type="evidence" value="ECO:0007669"/>
    <property type="project" value="InterPro"/>
</dbReference>
<dbReference type="GO" id="GO:0015979">
    <property type="term" value="P:photosynthesis"/>
    <property type="evidence" value="ECO:0000250"/>
    <property type="project" value="UniProtKB"/>
</dbReference>
<dbReference type="GO" id="GO:0019684">
    <property type="term" value="P:photosynthesis, light reaction"/>
    <property type="evidence" value="ECO:0007669"/>
    <property type="project" value="InterPro"/>
</dbReference>
<dbReference type="CDD" id="cd09224">
    <property type="entry name" value="CytoC_RC"/>
    <property type="match status" value="1"/>
</dbReference>
<dbReference type="Gene3D" id="1.10.468.10">
    <property type="entry name" value="Photosynthetic Reaction Center, subunit C, domain 2"/>
    <property type="match status" value="2"/>
</dbReference>
<dbReference type="InterPro" id="IPR023119">
    <property type="entry name" value="Multihaem_cyt_PRC_cyt_su-like"/>
</dbReference>
<dbReference type="InterPro" id="IPR036280">
    <property type="entry name" value="Multihaem_cyt_sf"/>
</dbReference>
<dbReference type="InterPro" id="IPR003158">
    <property type="entry name" value="Photosyn_RC_cyt_c-su"/>
</dbReference>
<dbReference type="NCBIfam" id="NF040706">
    <property type="entry name" value="photo_cyt_PufC"/>
    <property type="match status" value="1"/>
</dbReference>
<dbReference type="Pfam" id="PF02276">
    <property type="entry name" value="CytoC_RC"/>
    <property type="match status" value="1"/>
</dbReference>
<dbReference type="PIRSF" id="PIRSF000017">
    <property type="entry name" value="RC_cytochrome"/>
    <property type="match status" value="1"/>
</dbReference>
<dbReference type="SUPFAM" id="SSF48695">
    <property type="entry name" value="Multiheme cytochromes"/>
    <property type="match status" value="1"/>
</dbReference>
<dbReference type="PROSITE" id="PS51008">
    <property type="entry name" value="MULTIHEME_CYTC"/>
    <property type="match status" value="1"/>
</dbReference>
<reference evidence="12 13 14" key="1">
    <citation type="journal article" date="2014" name="Nature">
        <title>Structure of the LH1-RC complex from Thermochromatium tepidum at 3.0A.</title>
        <authorList>
            <person name="Niwa S."/>
            <person name="Yu L.J."/>
            <person name="Takeda K."/>
            <person name="Hirano Y."/>
            <person name="Kawakami T."/>
            <person name="Wang-Otomo Z.Y."/>
            <person name="Miki K."/>
        </authorList>
    </citation>
    <scope>NUCLEOTIDE SEQUENCE [GENOMIC DNA]</scope>
    <scope>X-RAY CRYSTALLOGRAPHY (3.01 ANGSTROMS) IN COMPLEX WITH HEME; PHOTOSYNTHETIC REACTION CENTER SUBUNITS PUFL; PUFM AND PUHA; LIGHT-HARVESTING COMPLEX LH1 ALPHA AND BETA SUBUNITS</scope>
    <scope>SUBCELLULAR LOCATION</scope>
</reference>
<reference evidence="11" key="2">
    <citation type="journal article" date="1998" name="Photosyn. Res.">
        <title>Biochemical and spectral characterization of the core light harvesting complex 1 (LH1) from the thermophilic purple sulfur bacterium Chromatium tepidum.</title>
        <authorList>
            <person name="Fathir I."/>
            <person name="Ashikaga M."/>
            <person name="Tanaka K."/>
            <person name="Katano T."/>
            <person name="Nirasawa T."/>
            <person name="Kobayashi M."/>
            <person name="Wang Z."/>
            <person name="Nozawa T."/>
        </authorList>
    </citation>
    <scope>NUCLEOTIDE SEQUENCE [GENOMIC DNA] OF 1-311</scope>
</reference>
<gene>
    <name evidence="11 12" type="primary">pufC</name>
</gene>